<proteinExistence type="inferred from homology"/>
<dbReference type="EC" id="7.6.2.5" evidence="1"/>
<dbReference type="EMBL" id="CP000050">
    <property type="protein sequence ID" value="AAY48961.1"/>
    <property type="molecule type" value="Genomic_DNA"/>
</dbReference>
<dbReference type="RefSeq" id="WP_011037364.1">
    <property type="nucleotide sequence ID" value="NZ_CP155948.1"/>
</dbReference>
<dbReference type="SMR" id="Q4UVG2"/>
<dbReference type="GeneID" id="58013208"/>
<dbReference type="KEGG" id="xcb:XC_1898"/>
<dbReference type="HOGENOM" id="CLU_000604_1_2_6"/>
<dbReference type="Proteomes" id="UP000000420">
    <property type="component" value="Chromosome"/>
</dbReference>
<dbReference type="GO" id="GO:0005886">
    <property type="term" value="C:plasma membrane"/>
    <property type="evidence" value="ECO:0007669"/>
    <property type="project" value="UniProtKB-SubCell"/>
</dbReference>
<dbReference type="GO" id="GO:0015439">
    <property type="term" value="F:ABC-type heme transporter activity"/>
    <property type="evidence" value="ECO:0007669"/>
    <property type="project" value="UniProtKB-EC"/>
</dbReference>
<dbReference type="GO" id="GO:0005524">
    <property type="term" value="F:ATP binding"/>
    <property type="evidence" value="ECO:0007669"/>
    <property type="project" value="UniProtKB-KW"/>
</dbReference>
<dbReference type="GO" id="GO:0016887">
    <property type="term" value="F:ATP hydrolysis activity"/>
    <property type="evidence" value="ECO:0007669"/>
    <property type="project" value="InterPro"/>
</dbReference>
<dbReference type="GO" id="GO:0017004">
    <property type="term" value="P:cytochrome complex assembly"/>
    <property type="evidence" value="ECO:0007669"/>
    <property type="project" value="UniProtKB-KW"/>
</dbReference>
<dbReference type="Gene3D" id="3.40.50.300">
    <property type="entry name" value="P-loop containing nucleotide triphosphate hydrolases"/>
    <property type="match status" value="1"/>
</dbReference>
<dbReference type="InterPro" id="IPR003593">
    <property type="entry name" value="AAA+_ATPase"/>
</dbReference>
<dbReference type="InterPro" id="IPR003439">
    <property type="entry name" value="ABC_transporter-like_ATP-bd"/>
</dbReference>
<dbReference type="InterPro" id="IPR017871">
    <property type="entry name" value="ABC_transporter-like_CS"/>
</dbReference>
<dbReference type="InterPro" id="IPR005895">
    <property type="entry name" value="ABC_transptr_haem_export_CcmA"/>
</dbReference>
<dbReference type="InterPro" id="IPR027417">
    <property type="entry name" value="P-loop_NTPase"/>
</dbReference>
<dbReference type="NCBIfam" id="TIGR01189">
    <property type="entry name" value="ccmA"/>
    <property type="match status" value="1"/>
</dbReference>
<dbReference type="NCBIfam" id="NF010061">
    <property type="entry name" value="PRK13538.1"/>
    <property type="match status" value="1"/>
</dbReference>
<dbReference type="PANTHER" id="PTHR43499">
    <property type="entry name" value="ABC TRANSPORTER I FAMILY MEMBER 1"/>
    <property type="match status" value="1"/>
</dbReference>
<dbReference type="PANTHER" id="PTHR43499:SF1">
    <property type="entry name" value="ABC TRANSPORTER I FAMILY MEMBER 1"/>
    <property type="match status" value="1"/>
</dbReference>
<dbReference type="Pfam" id="PF00005">
    <property type="entry name" value="ABC_tran"/>
    <property type="match status" value="1"/>
</dbReference>
<dbReference type="SMART" id="SM00382">
    <property type="entry name" value="AAA"/>
    <property type="match status" value="1"/>
</dbReference>
<dbReference type="SUPFAM" id="SSF52540">
    <property type="entry name" value="P-loop containing nucleoside triphosphate hydrolases"/>
    <property type="match status" value="1"/>
</dbReference>
<dbReference type="PROSITE" id="PS00211">
    <property type="entry name" value="ABC_TRANSPORTER_1"/>
    <property type="match status" value="1"/>
</dbReference>
<dbReference type="PROSITE" id="PS50893">
    <property type="entry name" value="ABC_TRANSPORTER_2"/>
    <property type="match status" value="1"/>
</dbReference>
<dbReference type="PROSITE" id="PS51243">
    <property type="entry name" value="CCMA"/>
    <property type="match status" value="1"/>
</dbReference>
<gene>
    <name evidence="1" type="primary">ccmA</name>
    <name type="ordered locus">XC_1898</name>
</gene>
<feature type="chain" id="PRO_0000271966" description="Cytochrome c biogenesis ATP-binding export protein CcmA">
    <location>
        <begin position="1"/>
        <end position="214"/>
    </location>
</feature>
<feature type="domain" description="ABC transporter" evidence="1">
    <location>
        <begin position="12"/>
        <end position="214"/>
    </location>
</feature>
<feature type="binding site" evidence="1">
    <location>
        <begin position="44"/>
        <end position="51"/>
    </location>
    <ligand>
        <name>ATP</name>
        <dbReference type="ChEBI" id="CHEBI:30616"/>
    </ligand>
</feature>
<sequence length="214" mass="22941">MIDPLHTAPPLLAARALAFSRNEEPVFGPLDFHVDAGEALLVQGDNGAGKTTLLRVLAGLLHVERGEILIDGKTARRGDRSRFMAYLGHLPGLKADLSTLENLHFLCGLHGRRAKQMPGSALAIVGLAGYEDALVRQLSAGQRKRLALARLWLSPAPLWLLDEPYANLDLEGITLVNRMISAHLRGGGAALVTTHGAYAAPPVRTRMLTLEAAA</sequence>
<comment type="function">
    <text evidence="1">Part of the ABC transporter complex CcmAB involved in the biogenesis of c-type cytochromes; once thought to export heme, this seems not to be the case, but its exact role is uncertain. Responsible for energy coupling to the transport system.</text>
</comment>
<comment type="catalytic activity">
    <reaction evidence="1">
        <text>heme b(in) + ATP + H2O = heme b(out) + ADP + phosphate + H(+)</text>
        <dbReference type="Rhea" id="RHEA:19261"/>
        <dbReference type="ChEBI" id="CHEBI:15377"/>
        <dbReference type="ChEBI" id="CHEBI:15378"/>
        <dbReference type="ChEBI" id="CHEBI:30616"/>
        <dbReference type="ChEBI" id="CHEBI:43474"/>
        <dbReference type="ChEBI" id="CHEBI:60344"/>
        <dbReference type="ChEBI" id="CHEBI:456216"/>
        <dbReference type="EC" id="7.6.2.5"/>
    </reaction>
</comment>
<comment type="subunit">
    <text evidence="1">The complex is composed of two ATP-binding proteins (CcmA) and two transmembrane proteins (CcmB).</text>
</comment>
<comment type="subcellular location">
    <subcellularLocation>
        <location evidence="1">Cell inner membrane</location>
        <topology evidence="1">Peripheral membrane protein</topology>
    </subcellularLocation>
</comment>
<comment type="similarity">
    <text evidence="1">Belongs to the ABC transporter superfamily. CcmA exporter (TC 3.A.1.107) family.</text>
</comment>
<reference key="1">
    <citation type="journal article" date="2005" name="Genome Res.">
        <title>Comparative and functional genomic analyses of the pathogenicity of phytopathogen Xanthomonas campestris pv. campestris.</title>
        <authorList>
            <person name="Qian W."/>
            <person name="Jia Y."/>
            <person name="Ren S.-X."/>
            <person name="He Y.-Q."/>
            <person name="Feng J.-X."/>
            <person name="Lu L.-F."/>
            <person name="Sun Q."/>
            <person name="Ying G."/>
            <person name="Tang D.-J."/>
            <person name="Tang H."/>
            <person name="Wu W."/>
            <person name="Hao P."/>
            <person name="Wang L."/>
            <person name="Jiang B.-L."/>
            <person name="Zeng S."/>
            <person name="Gu W.-Y."/>
            <person name="Lu G."/>
            <person name="Rong L."/>
            <person name="Tian Y."/>
            <person name="Yao Z."/>
            <person name="Fu G."/>
            <person name="Chen B."/>
            <person name="Fang R."/>
            <person name="Qiang B."/>
            <person name="Chen Z."/>
            <person name="Zhao G.-P."/>
            <person name="Tang J.-L."/>
            <person name="He C."/>
        </authorList>
    </citation>
    <scope>NUCLEOTIDE SEQUENCE [LARGE SCALE GENOMIC DNA]</scope>
    <source>
        <strain>8004</strain>
    </source>
</reference>
<keyword id="KW-0067">ATP-binding</keyword>
<keyword id="KW-0997">Cell inner membrane</keyword>
<keyword id="KW-1003">Cell membrane</keyword>
<keyword id="KW-0201">Cytochrome c-type biogenesis</keyword>
<keyword id="KW-0472">Membrane</keyword>
<keyword id="KW-0547">Nucleotide-binding</keyword>
<keyword id="KW-1278">Translocase</keyword>
<keyword id="KW-0813">Transport</keyword>
<organism>
    <name type="scientific">Xanthomonas campestris pv. campestris (strain 8004)</name>
    <dbReference type="NCBI Taxonomy" id="314565"/>
    <lineage>
        <taxon>Bacteria</taxon>
        <taxon>Pseudomonadati</taxon>
        <taxon>Pseudomonadota</taxon>
        <taxon>Gammaproteobacteria</taxon>
        <taxon>Lysobacterales</taxon>
        <taxon>Lysobacteraceae</taxon>
        <taxon>Xanthomonas</taxon>
    </lineage>
</organism>
<protein>
    <recommendedName>
        <fullName evidence="1">Cytochrome c biogenesis ATP-binding export protein CcmA</fullName>
        <ecNumber evidence="1">7.6.2.5</ecNumber>
    </recommendedName>
    <alternativeName>
        <fullName evidence="1">Heme exporter protein A</fullName>
    </alternativeName>
</protein>
<accession>Q4UVG2</accession>
<evidence type="ECO:0000255" key="1">
    <source>
        <dbReference type="HAMAP-Rule" id="MF_01707"/>
    </source>
</evidence>
<name>CCMA_XANC8</name>